<reference key="1">
    <citation type="journal article" date="1991" name="J. Bacteriol.">
        <title>Nucleotide sequence and genetic analysis of a 13.1-kilobase-pair Pseudomonas denitrificans DNA fragment containing five cob genes and identification of structural genes encoding Cob(I)alamin adenosyltransferase, cobyric acid synthase, and bifunctional cobinamide kinase-cobinamide phosphate guanylyltransferase.</title>
        <authorList>
            <person name="Crouzet J."/>
            <person name="Levy-Schil S."/>
            <person name="Cameron B."/>
            <person name="Cauchois L."/>
            <person name="Rigault S."/>
            <person name="Rouyez M.-C."/>
            <person name="Blanche F."/>
            <person name="Debussche L."/>
            <person name="Thibaut D."/>
        </authorList>
    </citation>
    <scope>NUCLEOTIDE SEQUENCE [GENOMIC DNA]</scope>
    <source>
        <strain>SC510</strain>
    </source>
</reference>
<reference key="2">
    <citation type="journal article" date="1991" name="J. Bacteriol.">
        <title>Purification and partial characterization of Cob(I)alamin adenosyltransferase from Pseudomonas denitrificans.</title>
        <authorList>
            <person name="Debussche L."/>
            <person name="Couder M."/>
            <person name="Thibaut D."/>
            <person name="Cameron B."/>
            <person name="Crouzet J."/>
            <person name="Blanche F."/>
        </authorList>
    </citation>
    <scope>CHARACTERIZATION</scope>
    <scope>PROTEIN SEQUENCE OF 2-15</scope>
</reference>
<gene>
    <name type="primary">cobO</name>
</gene>
<proteinExistence type="evidence at protein level"/>
<dbReference type="EC" id="2.5.1.17"/>
<dbReference type="EMBL" id="M62866">
    <property type="protein sequence ID" value="AAA25781.1"/>
    <property type="molecule type" value="Genomic_DNA"/>
</dbReference>
<dbReference type="SMR" id="P29930"/>
<dbReference type="BioCyc" id="MetaCyc:MONOMER-123"/>
<dbReference type="UniPathway" id="UPA00148">
    <property type="reaction ID" value="UER00233"/>
</dbReference>
<dbReference type="GO" id="GO:0005737">
    <property type="term" value="C:cytoplasm"/>
    <property type="evidence" value="ECO:0007669"/>
    <property type="project" value="UniProtKB-SubCell"/>
</dbReference>
<dbReference type="GO" id="GO:0005524">
    <property type="term" value="F:ATP binding"/>
    <property type="evidence" value="ECO:0007669"/>
    <property type="project" value="UniProtKB-KW"/>
</dbReference>
<dbReference type="GO" id="GO:0008817">
    <property type="term" value="F:corrinoid adenosyltransferase activity"/>
    <property type="evidence" value="ECO:0007669"/>
    <property type="project" value="UniProtKB-EC"/>
</dbReference>
<dbReference type="GO" id="GO:0009236">
    <property type="term" value="P:cobalamin biosynthetic process"/>
    <property type="evidence" value="ECO:0007669"/>
    <property type="project" value="UniProtKB-UniPathway"/>
</dbReference>
<dbReference type="GO" id="GO:0006779">
    <property type="term" value="P:porphyrin-containing compound biosynthetic process"/>
    <property type="evidence" value="ECO:0007669"/>
    <property type="project" value="UniProtKB-KW"/>
</dbReference>
<dbReference type="CDD" id="cd00561">
    <property type="entry name" value="CobA_ACA"/>
    <property type="match status" value="1"/>
</dbReference>
<dbReference type="Gene3D" id="3.40.50.300">
    <property type="entry name" value="P-loop containing nucleotide triphosphate hydrolases"/>
    <property type="match status" value="1"/>
</dbReference>
<dbReference type="InterPro" id="IPR003724">
    <property type="entry name" value="CblAdoTrfase_CobA"/>
</dbReference>
<dbReference type="InterPro" id="IPR025826">
    <property type="entry name" value="Co_AT_N_dom"/>
</dbReference>
<dbReference type="InterPro" id="IPR027417">
    <property type="entry name" value="P-loop_NTPase"/>
</dbReference>
<dbReference type="NCBIfam" id="TIGR00708">
    <property type="entry name" value="cobA"/>
    <property type="match status" value="1"/>
</dbReference>
<dbReference type="NCBIfam" id="NF004637">
    <property type="entry name" value="PRK05986.1"/>
    <property type="match status" value="1"/>
</dbReference>
<dbReference type="PANTHER" id="PTHR46638">
    <property type="entry name" value="CORRINOID ADENOSYLTRANSFERASE"/>
    <property type="match status" value="1"/>
</dbReference>
<dbReference type="PANTHER" id="PTHR46638:SF1">
    <property type="entry name" value="CORRINOID ADENOSYLTRANSFERASE"/>
    <property type="match status" value="1"/>
</dbReference>
<dbReference type="Pfam" id="PF12557">
    <property type="entry name" value="Co_AT_N"/>
    <property type="match status" value="1"/>
</dbReference>
<dbReference type="Pfam" id="PF02572">
    <property type="entry name" value="CobA_CobO_BtuR"/>
    <property type="match status" value="1"/>
</dbReference>
<dbReference type="PIRSF" id="PIRSF015617">
    <property type="entry name" value="Adensltrnsf_CobA"/>
    <property type="match status" value="1"/>
</dbReference>
<dbReference type="SUPFAM" id="SSF52540">
    <property type="entry name" value="P-loop containing nucleoside triphosphate hydrolases"/>
    <property type="match status" value="1"/>
</dbReference>
<feature type="initiator methionine" description="Removed" evidence="2">
    <location>
        <position position="1"/>
    </location>
</feature>
<feature type="chain" id="PRO_0000089992" description="Corrinoid adenosyltransferase">
    <location>
        <begin position="2"/>
        <end position="214"/>
    </location>
</feature>
<feature type="binding site" evidence="1">
    <location>
        <begin position="50"/>
        <end position="56"/>
    </location>
    <ligand>
        <name>ATP</name>
        <dbReference type="ChEBI" id="CHEBI:30616"/>
    </ligand>
</feature>
<feature type="sequence conflict" description="In Ref. 2; AA sequence." evidence="3" ref="2">
    <original>E</original>
    <variation>K</variation>
    <location>
        <position position="14"/>
    </location>
</feature>
<comment type="function">
    <text evidence="1">Required for both de novo synthesis of the corrin ring for the assimilation of exogenous corrinoids. Participates in the adenosylation of a variety of incomplete and complete corrinoids (By similarity).</text>
</comment>
<comment type="catalytic activity">
    <reaction>
        <text>2 cob(II)yrinate a,c diamide + reduced [electron-transfer flavoprotein] + 2 ATP = 2 adenosylcob(III)yrinate a,c-diamide + 2 triphosphate + oxidized [electron-transfer flavoprotein] + 3 H(+)</text>
        <dbReference type="Rhea" id="RHEA:11528"/>
        <dbReference type="Rhea" id="RHEA-COMP:10685"/>
        <dbReference type="Rhea" id="RHEA-COMP:10686"/>
        <dbReference type="ChEBI" id="CHEBI:15378"/>
        <dbReference type="ChEBI" id="CHEBI:18036"/>
        <dbReference type="ChEBI" id="CHEBI:30616"/>
        <dbReference type="ChEBI" id="CHEBI:57692"/>
        <dbReference type="ChEBI" id="CHEBI:58307"/>
        <dbReference type="ChEBI" id="CHEBI:58503"/>
        <dbReference type="ChEBI" id="CHEBI:58537"/>
        <dbReference type="EC" id="2.5.1.17"/>
    </reaction>
</comment>
<comment type="catalytic activity">
    <reaction>
        <text>2 cob(II)alamin + reduced [electron-transfer flavoprotein] + 2 ATP = 2 adenosylcob(III)alamin + 2 triphosphate + oxidized [electron-transfer flavoprotein] + 3 H(+)</text>
        <dbReference type="Rhea" id="RHEA:28671"/>
        <dbReference type="Rhea" id="RHEA-COMP:10685"/>
        <dbReference type="Rhea" id="RHEA-COMP:10686"/>
        <dbReference type="ChEBI" id="CHEBI:15378"/>
        <dbReference type="ChEBI" id="CHEBI:16304"/>
        <dbReference type="ChEBI" id="CHEBI:18036"/>
        <dbReference type="ChEBI" id="CHEBI:18408"/>
        <dbReference type="ChEBI" id="CHEBI:30616"/>
        <dbReference type="ChEBI" id="CHEBI:57692"/>
        <dbReference type="ChEBI" id="CHEBI:58307"/>
        <dbReference type="EC" id="2.5.1.17"/>
    </reaction>
</comment>
<comment type="cofactor">
    <cofactor>
        <name>Mn(2+)</name>
        <dbReference type="ChEBI" id="CHEBI:29035"/>
    </cofactor>
</comment>
<comment type="pathway">
    <text>Cofactor biosynthesis; adenosylcobalamin biosynthesis; adenosylcobalamin from cob(II)yrinate a,c-diamide: step 2/7.</text>
</comment>
<comment type="subunit">
    <text>Monomer.</text>
</comment>
<comment type="subcellular location">
    <subcellularLocation>
        <location>Cytoplasm</location>
    </subcellularLocation>
</comment>
<comment type="similarity">
    <text evidence="3">Belongs to the Cob(I)alamin adenosyltransferase family.</text>
</comment>
<comment type="caution">
    <text evidence="3">Was originally thought to originate from Pseudomonas denitrificans, but similarity searches show that the sequence is much closer to Sinorhizobium. The entry's taxonomy has been changed.</text>
</comment>
<accession>P29930</accession>
<name>COBO_SINSX</name>
<protein>
    <recommendedName>
        <fullName>Corrinoid adenosyltransferase</fullName>
        <ecNumber>2.5.1.17</ecNumber>
    </recommendedName>
    <alternativeName>
        <fullName>Cob(II)alamin adenosyltransferase</fullName>
    </alternativeName>
    <alternativeName>
        <fullName>Cob(II)yrinic acid a,c-diamide adenosyltransferase</fullName>
    </alternativeName>
    <alternativeName>
        <fullName>Cobinamide/cobalamin adenosyltransferase</fullName>
    </alternativeName>
</protein>
<sequence length="214" mass="24028">MSDETTVGGEAPAEKDDARHAMKMAKKKAAREKIMATKTDEKGLIIVNTGKGKGKSTAGFGMIFRHIAHGMPCAVVQFIKGAMATGERELIEKHFGDVCQFYTLGEGFTWETQDRARDVAMAEKAWEKAKELIRDERNSMVLLDEINIALRYDYIDVAEVVRFLKEEKPHMTHVVLTGRNAKEDLIEVADLVTEMELIKHPFRSGIKAQQGVEF</sequence>
<organism>
    <name type="scientific">Sinorhizobium sp</name>
    <dbReference type="NCBI Taxonomy" id="42445"/>
    <lineage>
        <taxon>Bacteria</taxon>
        <taxon>Pseudomonadati</taxon>
        <taxon>Pseudomonadota</taxon>
        <taxon>Alphaproteobacteria</taxon>
        <taxon>Hyphomicrobiales</taxon>
        <taxon>Rhizobiaceae</taxon>
        <taxon>Sinorhizobium/Ensifer group</taxon>
        <taxon>Sinorhizobium</taxon>
    </lineage>
</organism>
<keyword id="KW-0067">ATP-binding</keyword>
<keyword id="KW-0169">Cobalamin biosynthesis</keyword>
<keyword id="KW-0963">Cytoplasm</keyword>
<keyword id="KW-0903">Direct protein sequencing</keyword>
<keyword id="KW-0464">Manganese</keyword>
<keyword id="KW-0547">Nucleotide-binding</keyword>
<keyword id="KW-0627">Porphyrin biosynthesis</keyword>
<keyword id="KW-0808">Transferase</keyword>
<evidence type="ECO:0000250" key="1"/>
<evidence type="ECO:0000269" key="2">
    <source>
    </source>
</evidence>
<evidence type="ECO:0000305" key="3"/>